<reference key="1">
    <citation type="journal article" date="2004" name="Nat. Biotechnol.">
        <title>Complete genome sequence of the metabolically versatile photosynthetic bacterium Rhodopseudomonas palustris.</title>
        <authorList>
            <person name="Larimer F.W."/>
            <person name="Chain P."/>
            <person name="Hauser L."/>
            <person name="Lamerdin J.E."/>
            <person name="Malfatti S."/>
            <person name="Do L."/>
            <person name="Land M.L."/>
            <person name="Pelletier D.A."/>
            <person name="Beatty J.T."/>
            <person name="Lang A.S."/>
            <person name="Tabita F.R."/>
            <person name="Gibson J.L."/>
            <person name="Hanson T.E."/>
            <person name="Bobst C."/>
            <person name="Torres y Torres J.L."/>
            <person name="Peres C."/>
            <person name="Harrison F.H."/>
            <person name="Gibson J."/>
            <person name="Harwood C.S."/>
        </authorList>
    </citation>
    <scope>NUCLEOTIDE SEQUENCE [LARGE SCALE GENOMIC DNA]</scope>
    <source>
        <strain>ATCC BAA-98 / CGA009</strain>
    </source>
</reference>
<name>URE1_RHOPA</name>
<evidence type="ECO:0000255" key="1">
    <source>
        <dbReference type="HAMAP-Rule" id="MF_01953"/>
    </source>
</evidence>
<accession>Q6N3N3</accession>
<dbReference type="EC" id="3.5.1.5" evidence="1"/>
<dbReference type="EMBL" id="BX572604">
    <property type="protein sequence ID" value="CAE29101.1"/>
    <property type="molecule type" value="Genomic_DNA"/>
</dbReference>
<dbReference type="RefSeq" id="WP_011159199.1">
    <property type="nucleotide sequence ID" value="NZ_CP116810.1"/>
</dbReference>
<dbReference type="SMR" id="Q6N3N3"/>
<dbReference type="STRING" id="258594.RPA3660"/>
<dbReference type="GeneID" id="66894766"/>
<dbReference type="eggNOG" id="COG0804">
    <property type="taxonomic scope" value="Bacteria"/>
</dbReference>
<dbReference type="HOGENOM" id="CLU_000980_0_0_5"/>
<dbReference type="PhylomeDB" id="Q6N3N3"/>
<dbReference type="UniPathway" id="UPA00258">
    <property type="reaction ID" value="UER00370"/>
</dbReference>
<dbReference type="GO" id="GO:0005737">
    <property type="term" value="C:cytoplasm"/>
    <property type="evidence" value="ECO:0007669"/>
    <property type="project" value="UniProtKB-SubCell"/>
</dbReference>
<dbReference type="GO" id="GO:0016151">
    <property type="term" value="F:nickel cation binding"/>
    <property type="evidence" value="ECO:0007669"/>
    <property type="project" value="UniProtKB-UniRule"/>
</dbReference>
<dbReference type="GO" id="GO:0009039">
    <property type="term" value="F:urease activity"/>
    <property type="evidence" value="ECO:0007669"/>
    <property type="project" value="UniProtKB-UniRule"/>
</dbReference>
<dbReference type="GO" id="GO:0043419">
    <property type="term" value="P:urea catabolic process"/>
    <property type="evidence" value="ECO:0007669"/>
    <property type="project" value="UniProtKB-UniRule"/>
</dbReference>
<dbReference type="CDD" id="cd00375">
    <property type="entry name" value="Urease_alpha"/>
    <property type="match status" value="1"/>
</dbReference>
<dbReference type="Gene3D" id="3.20.20.140">
    <property type="entry name" value="Metal-dependent hydrolases"/>
    <property type="match status" value="1"/>
</dbReference>
<dbReference type="Gene3D" id="2.30.40.10">
    <property type="entry name" value="Urease, subunit C, domain 1"/>
    <property type="match status" value="1"/>
</dbReference>
<dbReference type="HAMAP" id="MF_01953">
    <property type="entry name" value="Urease_alpha"/>
    <property type="match status" value="1"/>
</dbReference>
<dbReference type="InterPro" id="IPR006680">
    <property type="entry name" value="Amidohydro-rel"/>
</dbReference>
<dbReference type="InterPro" id="IPR011059">
    <property type="entry name" value="Metal-dep_hydrolase_composite"/>
</dbReference>
<dbReference type="InterPro" id="IPR032466">
    <property type="entry name" value="Metal_Hydrolase"/>
</dbReference>
<dbReference type="InterPro" id="IPR011612">
    <property type="entry name" value="Urease_alpha_N_dom"/>
</dbReference>
<dbReference type="InterPro" id="IPR050112">
    <property type="entry name" value="Urease_alpha_subunit"/>
</dbReference>
<dbReference type="InterPro" id="IPR017950">
    <property type="entry name" value="Urease_AS"/>
</dbReference>
<dbReference type="InterPro" id="IPR005848">
    <property type="entry name" value="Urease_asu"/>
</dbReference>
<dbReference type="InterPro" id="IPR017951">
    <property type="entry name" value="Urease_asu_c"/>
</dbReference>
<dbReference type="InterPro" id="IPR029754">
    <property type="entry name" value="Urease_Ni-bd"/>
</dbReference>
<dbReference type="NCBIfam" id="NF009685">
    <property type="entry name" value="PRK13206.1"/>
    <property type="match status" value="1"/>
</dbReference>
<dbReference type="NCBIfam" id="NF009686">
    <property type="entry name" value="PRK13207.1"/>
    <property type="match status" value="1"/>
</dbReference>
<dbReference type="NCBIfam" id="TIGR01792">
    <property type="entry name" value="urease_alph"/>
    <property type="match status" value="1"/>
</dbReference>
<dbReference type="PANTHER" id="PTHR43440">
    <property type="entry name" value="UREASE"/>
    <property type="match status" value="1"/>
</dbReference>
<dbReference type="PANTHER" id="PTHR43440:SF1">
    <property type="entry name" value="UREASE"/>
    <property type="match status" value="1"/>
</dbReference>
<dbReference type="Pfam" id="PF01979">
    <property type="entry name" value="Amidohydro_1"/>
    <property type="match status" value="1"/>
</dbReference>
<dbReference type="Pfam" id="PF00449">
    <property type="entry name" value="Urease_alpha"/>
    <property type="match status" value="1"/>
</dbReference>
<dbReference type="PRINTS" id="PR01752">
    <property type="entry name" value="UREASE"/>
</dbReference>
<dbReference type="SUPFAM" id="SSF51338">
    <property type="entry name" value="Composite domain of metallo-dependent hydrolases"/>
    <property type="match status" value="2"/>
</dbReference>
<dbReference type="SUPFAM" id="SSF51556">
    <property type="entry name" value="Metallo-dependent hydrolases"/>
    <property type="match status" value="1"/>
</dbReference>
<dbReference type="PROSITE" id="PS01120">
    <property type="entry name" value="UREASE_1"/>
    <property type="match status" value="1"/>
</dbReference>
<dbReference type="PROSITE" id="PS00145">
    <property type="entry name" value="UREASE_2"/>
    <property type="match status" value="1"/>
</dbReference>
<dbReference type="PROSITE" id="PS51368">
    <property type="entry name" value="UREASE_3"/>
    <property type="match status" value="1"/>
</dbReference>
<proteinExistence type="inferred from homology"/>
<protein>
    <recommendedName>
        <fullName evidence="1">Urease subunit alpha</fullName>
        <ecNumber evidence="1">3.5.1.5</ecNumber>
    </recommendedName>
    <alternativeName>
        <fullName evidence="1">Urea amidohydrolase subunit alpha</fullName>
    </alternativeName>
</protein>
<organism>
    <name type="scientific">Rhodopseudomonas palustris (strain ATCC BAA-98 / CGA009)</name>
    <dbReference type="NCBI Taxonomy" id="258594"/>
    <lineage>
        <taxon>Bacteria</taxon>
        <taxon>Pseudomonadati</taxon>
        <taxon>Pseudomonadota</taxon>
        <taxon>Alphaproteobacteria</taxon>
        <taxon>Hyphomicrobiales</taxon>
        <taxon>Nitrobacteraceae</taxon>
        <taxon>Rhodopseudomonas</taxon>
    </lineage>
</organism>
<gene>
    <name evidence="1" type="primary">ureC</name>
    <name type="ordered locus">RPA3660</name>
</gene>
<comment type="catalytic activity">
    <reaction evidence="1">
        <text>urea + 2 H2O + H(+) = hydrogencarbonate + 2 NH4(+)</text>
        <dbReference type="Rhea" id="RHEA:20557"/>
        <dbReference type="ChEBI" id="CHEBI:15377"/>
        <dbReference type="ChEBI" id="CHEBI:15378"/>
        <dbReference type="ChEBI" id="CHEBI:16199"/>
        <dbReference type="ChEBI" id="CHEBI:17544"/>
        <dbReference type="ChEBI" id="CHEBI:28938"/>
        <dbReference type="EC" id="3.5.1.5"/>
    </reaction>
</comment>
<comment type="cofactor">
    <cofactor evidence="1">
        <name>Ni cation</name>
        <dbReference type="ChEBI" id="CHEBI:25516"/>
    </cofactor>
    <text evidence="1">Binds 2 nickel ions per subunit.</text>
</comment>
<comment type="pathway">
    <text evidence="1">Nitrogen metabolism; urea degradation; CO(2) and NH(3) from urea (urease route): step 1/1.</text>
</comment>
<comment type="subunit">
    <text evidence="1">Heterotrimer of UreA (gamma), UreB (beta) and UreC (alpha) subunits. Three heterotrimers associate to form the active enzyme.</text>
</comment>
<comment type="subcellular location">
    <subcellularLocation>
        <location evidence="1">Cytoplasm</location>
    </subcellularLocation>
</comment>
<comment type="PTM">
    <text evidence="1">Carboxylation allows a single lysine to coordinate two nickel ions.</text>
</comment>
<comment type="similarity">
    <text evidence="1">Belongs to the metallo-dependent hydrolases superfamily. Urease alpha subunit family.</text>
</comment>
<sequence>MSTRISRSVYADMFGPTTGDRVRLADTDLIIEVEKDLTTYGEEVKFGGGKVIRDGMGQSQVTNKDGAADTVITNALIVDHWGIVKADVAITAGVITAIGKAGNPDVQPNVDIIIGPGTDVIAGEGKILTAGGFDSHIHFICPQQIEHALMSGVTTMLGGGTGPSHGTFATTCTPGPWHIGRMIQSFDAFPVNLGISGKGNAALPGPLKEMIEGGACALKLHEDWGTTPAAIDNCLTVADAYDIQVMIHTDTLNESGFVEDTVKAFKGRTIHAFHTEGAGGGHAPDIIKVASLENVLPSSTNPTRPFTRNTIDEHLDMLMVCHHLDPSIAEDLAFAESRIRKETIAAEDILHDLGALSMMSSDSQAMGRLGEVIIRTWQTADKMKKQRGALPQDSARNDNFRVKRYIAKYTINPAIAHGVSKLIGSVETGKMADLVLWSPAFFGVKPDCIIKGGSIVAAPMGDPNASIPTPQPVHYQPMFGAYGKALTASSVVFTSQAAAAGNLARDLGIAKKLVPVSNVRGGISKKSMIHNDATPKLEVDPETYEVRADGELLTCAPAEVLPLAQRYFMF</sequence>
<keyword id="KW-0963">Cytoplasm</keyword>
<keyword id="KW-0378">Hydrolase</keyword>
<keyword id="KW-0479">Metal-binding</keyword>
<keyword id="KW-0533">Nickel</keyword>
<feature type="chain" id="PRO_0000234179" description="Urease subunit alpha">
    <location>
        <begin position="1"/>
        <end position="570"/>
    </location>
</feature>
<feature type="domain" description="Urease" evidence="1">
    <location>
        <begin position="131"/>
        <end position="570"/>
    </location>
</feature>
<feature type="active site" description="Proton donor" evidence="1">
    <location>
        <position position="322"/>
    </location>
</feature>
<feature type="binding site" evidence="1">
    <location>
        <position position="136"/>
    </location>
    <ligand>
        <name>Ni(2+)</name>
        <dbReference type="ChEBI" id="CHEBI:49786"/>
        <label>1</label>
    </ligand>
</feature>
<feature type="binding site" evidence="1">
    <location>
        <position position="138"/>
    </location>
    <ligand>
        <name>Ni(2+)</name>
        <dbReference type="ChEBI" id="CHEBI:49786"/>
        <label>1</label>
    </ligand>
</feature>
<feature type="binding site" description="via carbamate group" evidence="1">
    <location>
        <position position="219"/>
    </location>
    <ligand>
        <name>Ni(2+)</name>
        <dbReference type="ChEBI" id="CHEBI:49786"/>
        <label>1</label>
    </ligand>
</feature>
<feature type="binding site" description="via carbamate group" evidence="1">
    <location>
        <position position="219"/>
    </location>
    <ligand>
        <name>Ni(2+)</name>
        <dbReference type="ChEBI" id="CHEBI:49786"/>
        <label>2</label>
    </ligand>
</feature>
<feature type="binding site" evidence="1">
    <location>
        <position position="221"/>
    </location>
    <ligand>
        <name>substrate</name>
    </ligand>
</feature>
<feature type="binding site" evidence="1">
    <location>
        <position position="248"/>
    </location>
    <ligand>
        <name>Ni(2+)</name>
        <dbReference type="ChEBI" id="CHEBI:49786"/>
        <label>2</label>
    </ligand>
</feature>
<feature type="binding site" evidence="1">
    <location>
        <position position="274"/>
    </location>
    <ligand>
        <name>Ni(2+)</name>
        <dbReference type="ChEBI" id="CHEBI:49786"/>
        <label>2</label>
    </ligand>
</feature>
<feature type="binding site" evidence="1">
    <location>
        <position position="362"/>
    </location>
    <ligand>
        <name>Ni(2+)</name>
        <dbReference type="ChEBI" id="CHEBI:49786"/>
        <label>1</label>
    </ligand>
</feature>
<feature type="modified residue" description="N6-carboxylysine" evidence="1">
    <location>
        <position position="219"/>
    </location>
</feature>